<dbReference type="EC" id="2.2.1.9" evidence="1"/>
<dbReference type="EMBL" id="CP000964">
    <property type="protein sequence ID" value="ACI10445.1"/>
    <property type="molecule type" value="Genomic_DNA"/>
</dbReference>
<dbReference type="SMR" id="B5XNX0"/>
<dbReference type="KEGG" id="kpe:KPK_1487"/>
<dbReference type="HOGENOM" id="CLU_006051_3_0_6"/>
<dbReference type="UniPathway" id="UPA00079"/>
<dbReference type="UniPathway" id="UPA01057">
    <property type="reaction ID" value="UER00164"/>
</dbReference>
<dbReference type="Proteomes" id="UP000001734">
    <property type="component" value="Chromosome"/>
</dbReference>
<dbReference type="GO" id="GO:0070204">
    <property type="term" value="F:2-succinyl-5-enolpyruvyl-6-hydroxy-3-cyclohexene-1-carboxylic-acid synthase activity"/>
    <property type="evidence" value="ECO:0007669"/>
    <property type="project" value="UniProtKB-UniRule"/>
</dbReference>
<dbReference type="GO" id="GO:0000287">
    <property type="term" value="F:magnesium ion binding"/>
    <property type="evidence" value="ECO:0007669"/>
    <property type="project" value="UniProtKB-UniRule"/>
</dbReference>
<dbReference type="GO" id="GO:0030145">
    <property type="term" value="F:manganese ion binding"/>
    <property type="evidence" value="ECO:0007669"/>
    <property type="project" value="UniProtKB-UniRule"/>
</dbReference>
<dbReference type="GO" id="GO:0030976">
    <property type="term" value="F:thiamine pyrophosphate binding"/>
    <property type="evidence" value="ECO:0007669"/>
    <property type="project" value="UniProtKB-UniRule"/>
</dbReference>
<dbReference type="GO" id="GO:0009234">
    <property type="term" value="P:menaquinone biosynthetic process"/>
    <property type="evidence" value="ECO:0007669"/>
    <property type="project" value="UniProtKB-UniRule"/>
</dbReference>
<dbReference type="CDD" id="cd07037">
    <property type="entry name" value="TPP_PYR_MenD"/>
    <property type="match status" value="1"/>
</dbReference>
<dbReference type="CDD" id="cd02009">
    <property type="entry name" value="TPP_SHCHC_synthase"/>
    <property type="match status" value="1"/>
</dbReference>
<dbReference type="FunFam" id="3.40.50.970:FF:000029">
    <property type="entry name" value="2-succinyl-5-enolpyruvyl-6-hydroxy-3-cyclohexene-1-carboxylate synthase"/>
    <property type="match status" value="1"/>
</dbReference>
<dbReference type="Gene3D" id="3.40.50.970">
    <property type="match status" value="2"/>
</dbReference>
<dbReference type="Gene3D" id="3.40.50.1220">
    <property type="entry name" value="TPP-binding domain"/>
    <property type="match status" value="1"/>
</dbReference>
<dbReference type="HAMAP" id="MF_01659">
    <property type="entry name" value="MenD"/>
    <property type="match status" value="1"/>
</dbReference>
<dbReference type="InterPro" id="IPR004433">
    <property type="entry name" value="MenaQ_synth_MenD"/>
</dbReference>
<dbReference type="InterPro" id="IPR032264">
    <property type="entry name" value="MenD_middle"/>
</dbReference>
<dbReference type="InterPro" id="IPR029061">
    <property type="entry name" value="THDP-binding"/>
</dbReference>
<dbReference type="InterPro" id="IPR012001">
    <property type="entry name" value="Thiamin_PyroP_enz_TPP-bd_dom"/>
</dbReference>
<dbReference type="InterPro" id="IPR011766">
    <property type="entry name" value="TPP_enzyme_TPP-bd"/>
</dbReference>
<dbReference type="NCBIfam" id="TIGR00173">
    <property type="entry name" value="menD"/>
    <property type="match status" value="1"/>
</dbReference>
<dbReference type="PANTHER" id="PTHR42916">
    <property type="entry name" value="2-SUCCINYL-5-ENOLPYRUVYL-6-HYDROXY-3-CYCLOHEXENE-1-CARBOXYLATE SYNTHASE"/>
    <property type="match status" value="1"/>
</dbReference>
<dbReference type="PANTHER" id="PTHR42916:SF1">
    <property type="entry name" value="PROTEIN PHYLLO, CHLOROPLASTIC"/>
    <property type="match status" value="1"/>
</dbReference>
<dbReference type="Pfam" id="PF02775">
    <property type="entry name" value="TPP_enzyme_C"/>
    <property type="match status" value="1"/>
</dbReference>
<dbReference type="Pfam" id="PF16582">
    <property type="entry name" value="TPP_enzyme_M_2"/>
    <property type="match status" value="1"/>
</dbReference>
<dbReference type="Pfam" id="PF02776">
    <property type="entry name" value="TPP_enzyme_N"/>
    <property type="match status" value="1"/>
</dbReference>
<dbReference type="PIRSF" id="PIRSF004983">
    <property type="entry name" value="MenD"/>
    <property type="match status" value="1"/>
</dbReference>
<dbReference type="SUPFAM" id="SSF52518">
    <property type="entry name" value="Thiamin diphosphate-binding fold (THDP-binding)"/>
    <property type="match status" value="2"/>
</dbReference>
<sequence length="556" mass="60911">MSVSAFNRRWAAVILEALTRHGVQHICIAPGSRSTPLTLAAAENRAFIHHTHFDERGLGHLALGLAKASRQPVAVIVTSGTATANLYPALIEAGLTGEKLILLTADRPPELIDCGANQAIRQPGMFASHPSQTISLPRPSQDIPARWLVSTIDQALGALHAGGVHINCPFAEPLYGDMDETGVEWQQQLGNWWQSDKPWLRQALQLESEKQRDWFFWRQKRGVVVAGRMSAAEGKKVAEWAQTLGWPLIGDVLSQTGQPLQCADLWLGNGKAVSELAQAQIVVQLGSSLTGKRILQWQATCEPDEYWLVDNLPGRLDPAQHRGRRLLASVERWLELHPAEKRQPWATVIPELSRQAWQAAVASNEPFGEAQLAQRIRRYLPEQGQLFVGNSLVVRLIDALAQLPAGYPVYSNRGASGIDGLIATAAGVQRASARPTLAIVGDLSALYDLNSLALLRQASAPLVLIVVNNNGGQIFSMLPTPQDERRQFYLMPQDVDFSHAAAMFGLAYHRPDDWQSLDEALAGAWRRAGATVIELAVNETDGTQTLQQLLAQVSRL</sequence>
<name>MEND_KLEP3</name>
<organism>
    <name type="scientific">Klebsiella pneumoniae (strain 342)</name>
    <dbReference type="NCBI Taxonomy" id="507522"/>
    <lineage>
        <taxon>Bacteria</taxon>
        <taxon>Pseudomonadati</taxon>
        <taxon>Pseudomonadota</taxon>
        <taxon>Gammaproteobacteria</taxon>
        <taxon>Enterobacterales</taxon>
        <taxon>Enterobacteriaceae</taxon>
        <taxon>Klebsiella/Raoultella group</taxon>
        <taxon>Klebsiella</taxon>
        <taxon>Klebsiella pneumoniae complex</taxon>
    </lineage>
</organism>
<proteinExistence type="inferred from homology"/>
<gene>
    <name evidence="1" type="primary">menD</name>
    <name type="ordered locus">KPK_1487</name>
</gene>
<protein>
    <recommendedName>
        <fullName evidence="1">2-succinyl-5-enolpyruvyl-6-hydroxy-3-cyclohexene-1-carboxylate synthase</fullName>
        <shortName evidence="1">SEPHCHC synthase</shortName>
        <ecNumber evidence="1">2.2.1.9</ecNumber>
    </recommendedName>
    <alternativeName>
        <fullName evidence="1">Menaquinone biosynthesis protein MenD</fullName>
    </alternativeName>
</protein>
<comment type="function">
    <text evidence="1">Catalyzes the thiamine diphosphate-dependent decarboxylation of 2-oxoglutarate and the subsequent addition of the resulting succinic semialdehyde-thiamine pyrophosphate anion to isochorismate to yield 2-succinyl-5-enolpyruvyl-6-hydroxy-3-cyclohexene-1-carboxylate (SEPHCHC).</text>
</comment>
<comment type="catalytic activity">
    <reaction evidence="1">
        <text>isochorismate + 2-oxoglutarate + H(+) = 5-enolpyruvoyl-6-hydroxy-2-succinyl-cyclohex-3-ene-1-carboxylate + CO2</text>
        <dbReference type="Rhea" id="RHEA:25593"/>
        <dbReference type="ChEBI" id="CHEBI:15378"/>
        <dbReference type="ChEBI" id="CHEBI:16526"/>
        <dbReference type="ChEBI" id="CHEBI:16810"/>
        <dbReference type="ChEBI" id="CHEBI:29780"/>
        <dbReference type="ChEBI" id="CHEBI:58818"/>
        <dbReference type="EC" id="2.2.1.9"/>
    </reaction>
</comment>
<comment type="cofactor">
    <cofactor evidence="1">
        <name>Mg(2+)</name>
        <dbReference type="ChEBI" id="CHEBI:18420"/>
    </cofactor>
    <cofactor evidence="1">
        <name>Mn(2+)</name>
        <dbReference type="ChEBI" id="CHEBI:29035"/>
    </cofactor>
</comment>
<comment type="cofactor">
    <cofactor evidence="1">
        <name>thiamine diphosphate</name>
        <dbReference type="ChEBI" id="CHEBI:58937"/>
    </cofactor>
    <text evidence="1">Binds 1 thiamine pyrophosphate per subunit.</text>
</comment>
<comment type="pathway">
    <text evidence="1">Quinol/quinone metabolism; 1,4-dihydroxy-2-naphthoate biosynthesis; 1,4-dihydroxy-2-naphthoate from chorismate: step 2/7.</text>
</comment>
<comment type="pathway">
    <text evidence="1">Quinol/quinone metabolism; menaquinone biosynthesis.</text>
</comment>
<comment type="subunit">
    <text evidence="1">Homodimer.</text>
</comment>
<comment type="similarity">
    <text evidence="1">Belongs to the TPP enzyme family. MenD subfamily.</text>
</comment>
<feature type="chain" id="PRO_1000187079" description="2-succinyl-5-enolpyruvyl-6-hydroxy-3-cyclohexene-1-carboxylate synthase">
    <location>
        <begin position="1"/>
        <end position="556"/>
    </location>
</feature>
<keyword id="KW-0460">Magnesium</keyword>
<keyword id="KW-0464">Manganese</keyword>
<keyword id="KW-0474">Menaquinone biosynthesis</keyword>
<keyword id="KW-0479">Metal-binding</keyword>
<keyword id="KW-0786">Thiamine pyrophosphate</keyword>
<keyword id="KW-0808">Transferase</keyword>
<reference key="1">
    <citation type="journal article" date="2008" name="PLoS Genet.">
        <title>Complete genome sequence of the N2-fixing broad host range endophyte Klebsiella pneumoniae 342 and virulence predictions verified in mice.</title>
        <authorList>
            <person name="Fouts D.E."/>
            <person name="Tyler H.L."/>
            <person name="DeBoy R.T."/>
            <person name="Daugherty S."/>
            <person name="Ren Q."/>
            <person name="Badger J.H."/>
            <person name="Durkin A.S."/>
            <person name="Huot H."/>
            <person name="Shrivastava S."/>
            <person name="Kothari S."/>
            <person name="Dodson R.J."/>
            <person name="Mohamoud Y."/>
            <person name="Khouri H."/>
            <person name="Roesch L.F.W."/>
            <person name="Krogfelt K.A."/>
            <person name="Struve C."/>
            <person name="Triplett E.W."/>
            <person name="Methe B.A."/>
        </authorList>
    </citation>
    <scope>NUCLEOTIDE SEQUENCE [LARGE SCALE GENOMIC DNA]</scope>
    <source>
        <strain>342</strain>
    </source>
</reference>
<accession>B5XNX0</accession>
<evidence type="ECO:0000255" key="1">
    <source>
        <dbReference type="HAMAP-Rule" id="MF_01659"/>
    </source>
</evidence>